<dbReference type="EC" id="2.1.1.182" evidence="1"/>
<dbReference type="EMBL" id="FM211192">
    <property type="protein sequence ID" value="CAR70334.1"/>
    <property type="molecule type" value="Genomic_DNA"/>
</dbReference>
<dbReference type="SMR" id="B8ZU59"/>
<dbReference type="KEGG" id="mlb:MLBr00241"/>
<dbReference type="HOGENOM" id="CLU_041220_1_1_11"/>
<dbReference type="Proteomes" id="UP000006900">
    <property type="component" value="Chromosome"/>
</dbReference>
<dbReference type="GO" id="GO:0005829">
    <property type="term" value="C:cytosol"/>
    <property type="evidence" value="ECO:0007669"/>
    <property type="project" value="TreeGrafter"/>
</dbReference>
<dbReference type="GO" id="GO:0052908">
    <property type="term" value="F:16S rRNA (adenine(1518)-N(6)/adenine(1519)-N(6))-dimethyltransferase activity"/>
    <property type="evidence" value="ECO:0007669"/>
    <property type="project" value="UniProtKB-EC"/>
</dbReference>
<dbReference type="GO" id="GO:0003723">
    <property type="term" value="F:RNA binding"/>
    <property type="evidence" value="ECO:0007669"/>
    <property type="project" value="UniProtKB-KW"/>
</dbReference>
<dbReference type="CDD" id="cd02440">
    <property type="entry name" value="AdoMet_MTases"/>
    <property type="match status" value="1"/>
</dbReference>
<dbReference type="FunFam" id="1.10.8.100:FF:000003">
    <property type="entry name" value="Ribosomal RNA small subunit methyltransferase A"/>
    <property type="match status" value="1"/>
</dbReference>
<dbReference type="FunFam" id="3.40.50.150:FF:000023">
    <property type="entry name" value="Ribosomal RNA small subunit methyltransferase A"/>
    <property type="match status" value="1"/>
</dbReference>
<dbReference type="Gene3D" id="1.10.8.100">
    <property type="entry name" value="Ribosomal RNA adenine dimethylase-like, domain 2"/>
    <property type="match status" value="1"/>
</dbReference>
<dbReference type="Gene3D" id="3.40.50.150">
    <property type="entry name" value="Vaccinia Virus protein VP39"/>
    <property type="match status" value="1"/>
</dbReference>
<dbReference type="HAMAP" id="MF_00607">
    <property type="entry name" value="16SrRNA_methyltr_A"/>
    <property type="match status" value="1"/>
</dbReference>
<dbReference type="InterPro" id="IPR001737">
    <property type="entry name" value="KsgA/Erm"/>
</dbReference>
<dbReference type="InterPro" id="IPR023165">
    <property type="entry name" value="rRNA_Ade_diMease-like_C"/>
</dbReference>
<dbReference type="InterPro" id="IPR020596">
    <property type="entry name" value="rRNA_Ade_Mease_Trfase_CS"/>
</dbReference>
<dbReference type="InterPro" id="IPR020598">
    <property type="entry name" value="rRNA_Ade_methylase_Trfase_N"/>
</dbReference>
<dbReference type="InterPro" id="IPR011530">
    <property type="entry name" value="rRNA_adenine_dimethylase"/>
</dbReference>
<dbReference type="InterPro" id="IPR029063">
    <property type="entry name" value="SAM-dependent_MTases_sf"/>
</dbReference>
<dbReference type="NCBIfam" id="TIGR00755">
    <property type="entry name" value="ksgA"/>
    <property type="match status" value="1"/>
</dbReference>
<dbReference type="PANTHER" id="PTHR11727">
    <property type="entry name" value="DIMETHYLADENOSINE TRANSFERASE"/>
    <property type="match status" value="1"/>
</dbReference>
<dbReference type="PANTHER" id="PTHR11727:SF7">
    <property type="entry name" value="DIMETHYLADENOSINE TRANSFERASE-RELATED"/>
    <property type="match status" value="1"/>
</dbReference>
<dbReference type="Pfam" id="PF00398">
    <property type="entry name" value="RrnaAD"/>
    <property type="match status" value="1"/>
</dbReference>
<dbReference type="SMART" id="SM00650">
    <property type="entry name" value="rADc"/>
    <property type="match status" value="1"/>
</dbReference>
<dbReference type="SUPFAM" id="SSF53335">
    <property type="entry name" value="S-adenosyl-L-methionine-dependent methyltransferases"/>
    <property type="match status" value="1"/>
</dbReference>
<dbReference type="PROSITE" id="PS01131">
    <property type="entry name" value="RRNA_A_DIMETH"/>
    <property type="match status" value="1"/>
</dbReference>
<dbReference type="PROSITE" id="PS51689">
    <property type="entry name" value="SAM_RNA_A_N6_MT"/>
    <property type="match status" value="1"/>
</dbReference>
<gene>
    <name evidence="1" type="primary">rsmA</name>
    <name evidence="1" type="synonym">ksgA</name>
    <name type="ordered locus">MLBr00241</name>
</gene>
<comment type="function">
    <text evidence="1">Specifically dimethylates two adjacent adenosines (A1518 and A1519) in the loop of a conserved hairpin near the 3'-end of 16S rRNA in the 30S particle. May play a critical role in biogenesis of 30S subunits.</text>
</comment>
<comment type="catalytic activity">
    <reaction evidence="1">
        <text>adenosine(1518)/adenosine(1519) in 16S rRNA + 4 S-adenosyl-L-methionine = N(6)-dimethyladenosine(1518)/N(6)-dimethyladenosine(1519) in 16S rRNA + 4 S-adenosyl-L-homocysteine + 4 H(+)</text>
        <dbReference type="Rhea" id="RHEA:19609"/>
        <dbReference type="Rhea" id="RHEA-COMP:10232"/>
        <dbReference type="Rhea" id="RHEA-COMP:10233"/>
        <dbReference type="ChEBI" id="CHEBI:15378"/>
        <dbReference type="ChEBI" id="CHEBI:57856"/>
        <dbReference type="ChEBI" id="CHEBI:59789"/>
        <dbReference type="ChEBI" id="CHEBI:74411"/>
        <dbReference type="ChEBI" id="CHEBI:74493"/>
        <dbReference type="EC" id="2.1.1.182"/>
    </reaction>
</comment>
<comment type="subcellular location">
    <subcellularLocation>
        <location evidence="1">Cytoplasm</location>
    </subcellularLocation>
</comment>
<comment type="similarity">
    <text evidence="1">Belongs to the class I-like SAM-binding methyltransferase superfamily. rRNA adenine N(6)-methyltransferase family. RsmA subfamily.</text>
</comment>
<sequence>MQRKSGCTLTIRLLERTEIRWLVKELECRPRKSLGQNFVHDANTVRRVVSTSRVNRSDFVLEVGPGFGSLTLALLDCGAAVSAIEIDPVLAGRLPQTVAEHSNNEIHRLTVCNRDVLSFRRGDLATEPTALVANLPYNVAVPALLHLLAEFPSIRTVTVMVQAEVAERLAAEPGGKDYGVPSVKLSFFGRVRRCGMVSPTVFWPIPRVYSGLVRVDRYATSPWPTDDAFRRQVFELVDIAFTQRRKTSRNAFVKWAGSSNESANRLLAASIDPARRGETLSIDDFVRLLRRSDGRDDAAVRSASAS</sequence>
<protein>
    <recommendedName>
        <fullName evidence="1">Ribosomal RNA small subunit methyltransferase A</fullName>
        <ecNumber evidence="1">2.1.1.182</ecNumber>
    </recommendedName>
    <alternativeName>
        <fullName evidence="1">16S rRNA (adenine(1518)-N(6)/adenine(1519)-N(6))-dimethyltransferase</fullName>
    </alternativeName>
    <alternativeName>
        <fullName evidence="1">16S rRNA dimethyladenosine transferase</fullName>
    </alternativeName>
    <alternativeName>
        <fullName evidence="1">16S rRNA dimethylase</fullName>
    </alternativeName>
    <alternativeName>
        <fullName evidence="1">S-adenosylmethionine-6-N', N'-adenosyl(rRNA) dimethyltransferase</fullName>
    </alternativeName>
</protein>
<accession>B8ZU59</accession>
<reference key="1">
    <citation type="journal article" date="2009" name="Nat. Genet.">
        <title>Comparative genomic and phylogeographic analysis of Mycobacterium leprae.</title>
        <authorList>
            <person name="Monot M."/>
            <person name="Honore N."/>
            <person name="Garnier T."/>
            <person name="Zidane N."/>
            <person name="Sherafi D."/>
            <person name="Paniz-Mondolfi A."/>
            <person name="Matsuoka M."/>
            <person name="Taylor G.M."/>
            <person name="Donoghue H.D."/>
            <person name="Bouwman A."/>
            <person name="Mays S."/>
            <person name="Watson C."/>
            <person name="Lockwood D."/>
            <person name="Khamispour A."/>
            <person name="Dowlati Y."/>
            <person name="Jianping S."/>
            <person name="Rea T.H."/>
            <person name="Vera-Cabrera L."/>
            <person name="Stefani M.M."/>
            <person name="Banu S."/>
            <person name="Macdonald M."/>
            <person name="Sapkota B.R."/>
            <person name="Spencer J.S."/>
            <person name="Thomas J."/>
            <person name="Harshman K."/>
            <person name="Singh P."/>
            <person name="Busso P."/>
            <person name="Gattiker A."/>
            <person name="Rougemont J."/>
            <person name="Brennan P.J."/>
            <person name="Cole S.T."/>
        </authorList>
    </citation>
    <scope>NUCLEOTIDE SEQUENCE [LARGE SCALE GENOMIC DNA]</scope>
    <source>
        <strain>Br4923</strain>
    </source>
</reference>
<organism>
    <name type="scientific">Mycobacterium leprae (strain Br4923)</name>
    <dbReference type="NCBI Taxonomy" id="561304"/>
    <lineage>
        <taxon>Bacteria</taxon>
        <taxon>Bacillati</taxon>
        <taxon>Actinomycetota</taxon>
        <taxon>Actinomycetes</taxon>
        <taxon>Mycobacteriales</taxon>
        <taxon>Mycobacteriaceae</taxon>
        <taxon>Mycobacterium</taxon>
    </lineage>
</organism>
<keyword id="KW-0963">Cytoplasm</keyword>
<keyword id="KW-0489">Methyltransferase</keyword>
<keyword id="KW-0694">RNA-binding</keyword>
<keyword id="KW-0698">rRNA processing</keyword>
<keyword id="KW-0949">S-adenosyl-L-methionine</keyword>
<keyword id="KW-0808">Transferase</keyword>
<name>RSMA_MYCLB</name>
<proteinExistence type="inferred from homology"/>
<evidence type="ECO:0000255" key="1">
    <source>
        <dbReference type="HAMAP-Rule" id="MF_00607"/>
    </source>
</evidence>
<feature type="chain" id="PRO_1000194390" description="Ribosomal RNA small subunit methyltransferase A">
    <location>
        <begin position="1"/>
        <end position="306"/>
    </location>
</feature>
<feature type="binding site" evidence="1">
    <location>
        <position position="37"/>
    </location>
    <ligand>
        <name>S-adenosyl-L-methionine</name>
        <dbReference type="ChEBI" id="CHEBI:59789"/>
    </ligand>
</feature>
<feature type="binding site" evidence="1">
    <location>
        <position position="39"/>
    </location>
    <ligand>
        <name>S-adenosyl-L-methionine</name>
        <dbReference type="ChEBI" id="CHEBI:59789"/>
    </ligand>
</feature>
<feature type="binding site" evidence="1">
    <location>
        <position position="64"/>
    </location>
    <ligand>
        <name>S-adenosyl-L-methionine</name>
        <dbReference type="ChEBI" id="CHEBI:59789"/>
    </ligand>
</feature>
<feature type="binding site" evidence="1">
    <location>
        <position position="85"/>
    </location>
    <ligand>
        <name>S-adenosyl-L-methionine</name>
        <dbReference type="ChEBI" id="CHEBI:59789"/>
    </ligand>
</feature>
<feature type="binding site" evidence="1">
    <location>
        <position position="115"/>
    </location>
    <ligand>
        <name>S-adenosyl-L-methionine</name>
        <dbReference type="ChEBI" id="CHEBI:59789"/>
    </ligand>
</feature>
<feature type="binding site" evidence="1">
    <location>
        <position position="134"/>
    </location>
    <ligand>
        <name>S-adenosyl-L-methionine</name>
        <dbReference type="ChEBI" id="CHEBI:59789"/>
    </ligand>
</feature>